<dbReference type="EC" id="2.1.2.11" evidence="1"/>
<dbReference type="EMBL" id="CP000724">
    <property type="protein sequence ID" value="ABR47397.1"/>
    <property type="molecule type" value="Genomic_DNA"/>
</dbReference>
<dbReference type="RefSeq" id="WP_012062438.1">
    <property type="nucleotide sequence ID" value="NC_009633.1"/>
</dbReference>
<dbReference type="SMR" id="A6TMH9"/>
<dbReference type="STRING" id="293826.Amet_1189"/>
<dbReference type="KEGG" id="amt:Amet_1189"/>
<dbReference type="eggNOG" id="COG0413">
    <property type="taxonomic scope" value="Bacteria"/>
</dbReference>
<dbReference type="HOGENOM" id="CLU_036645_1_0_9"/>
<dbReference type="OrthoDB" id="9781789at2"/>
<dbReference type="UniPathway" id="UPA00028">
    <property type="reaction ID" value="UER00003"/>
</dbReference>
<dbReference type="Proteomes" id="UP000001572">
    <property type="component" value="Chromosome"/>
</dbReference>
<dbReference type="GO" id="GO:0005737">
    <property type="term" value="C:cytoplasm"/>
    <property type="evidence" value="ECO:0007669"/>
    <property type="project" value="UniProtKB-SubCell"/>
</dbReference>
<dbReference type="GO" id="GO:0003864">
    <property type="term" value="F:3-methyl-2-oxobutanoate hydroxymethyltransferase activity"/>
    <property type="evidence" value="ECO:0007669"/>
    <property type="project" value="UniProtKB-UniRule"/>
</dbReference>
<dbReference type="GO" id="GO:0000287">
    <property type="term" value="F:magnesium ion binding"/>
    <property type="evidence" value="ECO:0007669"/>
    <property type="project" value="TreeGrafter"/>
</dbReference>
<dbReference type="GO" id="GO:0015940">
    <property type="term" value="P:pantothenate biosynthetic process"/>
    <property type="evidence" value="ECO:0007669"/>
    <property type="project" value="UniProtKB-UniRule"/>
</dbReference>
<dbReference type="CDD" id="cd06557">
    <property type="entry name" value="KPHMT-like"/>
    <property type="match status" value="1"/>
</dbReference>
<dbReference type="FunFam" id="3.20.20.60:FF:000003">
    <property type="entry name" value="3-methyl-2-oxobutanoate hydroxymethyltransferase"/>
    <property type="match status" value="1"/>
</dbReference>
<dbReference type="Gene3D" id="3.20.20.60">
    <property type="entry name" value="Phosphoenolpyruvate-binding domains"/>
    <property type="match status" value="1"/>
</dbReference>
<dbReference type="HAMAP" id="MF_00156">
    <property type="entry name" value="PanB"/>
    <property type="match status" value="1"/>
</dbReference>
<dbReference type="InterPro" id="IPR003700">
    <property type="entry name" value="Pantoate_hydroxy_MeTrfase"/>
</dbReference>
<dbReference type="InterPro" id="IPR015813">
    <property type="entry name" value="Pyrv/PenolPyrv_kinase-like_dom"/>
</dbReference>
<dbReference type="InterPro" id="IPR040442">
    <property type="entry name" value="Pyrv_kinase-like_dom_sf"/>
</dbReference>
<dbReference type="NCBIfam" id="TIGR00222">
    <property type="entry name" value="panB"/>
    <property type="match status" value="1"/>
</dbReference>
<dbReference type="NCBIfam" id="NF001452">
    <property type="entry name" value="PRK00311.1"/>
    <property type="match status" value="1"/>
</dbReference>
<dbReference type="PANTHER" id="PTHR20881">
    <property type="entry name" value="3-METHYL-2-OXOBUTANOATE HYDROXYMETHYLTRANSFERASE"/>
    <property type="match status" value="1"/>
</dbReference>
<dbReference type="PANTHER" id="PTHR20881:SF0">
    <property type="entry name" value="3-METHYL-2-OXOBUTANOATE HYDROXYMETHYLTRANSFERASE"/>
    <property type="match status" value="1"/>
</dbReference>
<dbReference type="Pfam" id="PF02548">
    <property type="entry name" value="Pantoate_transf"/>
    <property type="match status" value="1"/>
</dbReference>
<dbReference type="PIRSF" id="PIRSF000388">
    <property type="entry name" value="Pantoate_hydroxy_MeTrfase"/>
    <property type="match status" value="1"/>
</dbReference>
<dbReference type="SUPFAM" id="SSF51621">
    <property type="entry name" value="Phosphoenolpyruvate/pyruvate domain"/>
    <property type="match status" value="1"/>
</dbReference>
<reference key="1">
    <citation type="journal article" date="2016" name="Genome Announc.">
        <title>Complete genome sequence of Alkaliphilus metalliredigens strain QYMF, an alkaliphilic and metal-reducing bacterium isolated from borax-contaminated leachate ponds.</title>
        <authorList>
            <person name="Hwang C."/>
            <person name="Copeland A."/>
            <person name="Lucas S."/>
            <person name="Lapidus A."/>
            <person name="Barry K."/>
            <person name="Detter J.C."/>
            <person name="Glavina Del Rio T."/>
            <person name="Hammon N."/>
            <person name="Israni S."/>
            <person name="Dalin E."/>
            <person name="Tice H."/>
            <person name="Pitluck S."/>
            <person name="Chertkov O."/>
            <person name="Brettin T."/>
            <person name="Bruce D."/>
            <person name="Han C."/>
            <person name="Schmutz J."/>
            <person name="Larimer F."/>
            <person name="Land M.L."/>
            <person name="Hauser L."/>
            <person name="Kyrpides N."/>
            <person name="Mikhailova N."/>
            <person name="Ye Q."/>
            <person name="Zhou J."/>
            <person name="Richardson P."/>
            <person name="Fields M.W."/>
        </authorList>
    </citation>
    <scope>NUCLEOTIDE SEQUENCE [LARGE SCALE GENOMIC DNA]</scope>
    <source>
        <strain>QYMF</strain>
    </source>
</reference>
<keyword id="KW-0963">Cytoplasm</keyword>
<keyword id="KW-0460">Magnesium</keyword>
<keyword id="KW-0479">Metal-binding</keyword>
<keyword id="KW-0566">Pantothenate biosynthesis</keyword>
<keyword id="KW-1185">Reference proteome</keyword>
<keyword id="KW-0808">Transferase</keyword>
<organism>
    <name type="scientific">Alkaliphilus metalliredigens (strain QYMF)</name>
    <dbReference type="NCBI Taxonomy" id="293826"/>
    <lineage>
        <taxon>Bacteria</taxon>
        <taxon>Bacillati</taxon>
        <taxon>Bacillota</taxon>
        <taxon>Clostridia</taxon>
        <taxon>Peptostreptococcales</taxon>
        <taxon>Natronincolaceae</taxon>
        <taxon>Alkaliphilus</taxon>
    </lineage>
</organism>
<gene>
    <name evidence="1" type="primary">panB</name>
    <name type="ordered locus">Amet_1189</name>
</gene>
<feature type="chain" id="PRO_1000058180" description="3-methyl-2-oxobutanoate hydroxymethyltransferase">
    <location>
        <begin position="1"/>
        <end position="282"/>
    </location>
</feature>
<feature type="active site" description="Proton acceptor" evidence="1">
    <location>
        <position position="184"/>
    </location>
</feature>
<feature type="binding site" evidence="1">
    <location>
        <begin position="46"/>
        <end position="47"/>
    </location>
    <ligand>
        <name>3-methyl-2-oxobutanoate</name>
        <dbReference type="ChEBI" id="CHEBI:11851"/>
    </ligand>
</feature>
<feature type="binding site" evidence="1">
    <location>
        <position position="46"/>
    </location>
    <ligand>
        <name>Mg(2+)</name>
        <dbReference type="ChEBI" id="CHEBI:18420"/>
    </ligand>
</feature>
<feature type="binding site" evidence="1">
    <location>
        <position position="85"/>
    </location>
    <ligand>
        <name>3-methyl-2-oxobutanoate</name>
        <dbReference type="ChEBI" id="CHEBI:11851"/>
    </ligand>
</feature>
<feature type="binding site" evidence="1">
    <location>
        <position position="85"/>
    </location>
    <ligand>
        <name>Mg(2+)</name>
        <dbReference type="ChEBI" id="CHEBI:18420"/>
    </ligand>
</feature>
<feature type="binding site" evidence="1">
    <location>
        <position position="115"/>
    </location>
    <ligand>
        <name>3-methyl-2-oxobutanoate</name>
        <dbReference type="ChEBI" id="CHEBI:11851"/>
    </ligand>
</feature>
<feature type="binding site" evidence="1">
    <location>
        <position position="117"/>
    </location>
    <ligand>
        <name>Mg(2+)</name>
        <dbReference type="ChEBI" id="CHEBI:18420"/>
    </ligand>
</feature>
<comment type="function">
    <text evidence="1">Catalyzes the reversible reaction in which hydroxymethyl group from 5,10-methylenetetrahydrofolate is transferred onto alpha-ketoisovalerate to form ketopantoate.</text>
</comment>
<comment type="catalytic activity">
    <reaction evidence="1">
        <text>3-methyl-2-oxobutanoate + (6R)-5,10-methylene-5,6,7,8-tetrahydrofolate + H2O = 2-dehydropantoate + (6S)-5,6,7,8-tetrahydrofolate</text>
        <dbReference type="Rhea" id="RHEA:11824"/>
        <dbReference type="ChEBI" id="CHEBI:11561"/>
        <dbReference type="ChEBI" id="CHEBI:11851"/>
        <dbReference type="ChEBI" id="CHEBI:15377"/>
        <dbReference type="ChEBI" id="CHEBI:15636"/>
        <dbReference type="ChEBI" id="CHEBI:57453"/>
        <dbReference type="EC" id="2.1.2.11"/>
    </reaction>
</comment>
<comment type="cofactor">
    <cofactor evidence="1">
        <name>Mg(2+)</name>
        <dbReference type="ChEBI" id="CHEBI:18420"/>
    </cofactor>
    <text evidence="1">Binds 1 Mg(2+) ion per subunit.</text>
</comment>
<comment type="pathway">
    <text evidence="1">Cofactor biosynthesis; (R)-pantothenate biosynthesis; (R)-pantoate from 3-methyl-2-oxobutanoate: step 1/2.</text>
</comment>
<comment type="subunit">
    <text evidence="1">Homodecamer; pentamer of dimers.</text>
</comment>
<comment type="subcellular location">
    <subcellularLocation>
        <location evidence="1">Cytoplasm</location>
    </subcellularLocation>
</comment>
<comment type="similarity">
    <text evidence="1">Belongs to the PanB family.</text>
</comment>
<evidence type="ECO:0000255" key="1">
    <source>
        <dbReference type="HAMAP-Rule" id="MF_00156"/>
    </source>
</evidence>
<name>PANB_ALKMQ</name>
<proteinExistence type="inferred from homology"/>
<protein>
    <recommendedName>
        <fullName evidence="1">3-methyl-2-oxobutanoate hydroxymethyltransferase</fullName>
        <ecNumber evidence="1">2.1.2.11</ecNumber>
    </recommendedName>
    <alternativeName>
        <fullName evidence="1">Ketopantoate hydroxymethyltransferase</fullName>
        <shortName evidence="1">KPHMT</shortName>
    </alternativeName>
</protein>
<accession>A6TMH9</accession>
<sequence length="282" mass="30924">MAKKKSILDLMKMKKAEEQVAWVTAYDFPTASFAEQAGMEMILVGDSLGMVVLGYQGTIPVTMEDCISHCQAVRRGAPNTWVIGDMPFGSYQVSDEDAVRNAVRFMKEADVDCIKLEGGDRVKSRIRAITDAGIPVMGHIGLTPQSSGQLGGFKAQGRRVDNARVLIQDALVVQEAGAFSLLVEAVPPEVTKFIADKLDIPVYSIGAGPCDGQLVISGDMLGKFQAFTPKFIKKYANVAEVETNAFKEYVAEVKAGQFPTDDHVYHILDTQEEFEKLFQEFK</sequence>